<evidence type="ECO:0000255" key="1">
    <source>
        <dbReference type="HAMAP-Rule" id="MF_03035"/>
    </source>
</evidence>
<evidence type="ECO:0000256" key="2">
    <source>
        <dbReference type="SAM" id="MobiDB-lite"/>
    </source>
</evidence>
<evidence type="ECO:0000305" key="3"/>
<proteinExistence type="inferred from homology"/>
<dbReference type="EMBL" id="AAHF01000003">
    <property type="protein sequence ID" value="EAL91471.1"/>
    <property type="molecule type" value="Genomic_DNA"/>
</dbReference>
<dbReference type="RefSeq" id="XP_753509.1">
    <property type="nucleotide sequence ID" value="XM_748416.1"/>
</dbReference>
<dbReference type="SMR" id="Q4WVA5"/>
<dbReference type="FunCoup" id="Q4WVA5">
    <property type="interactions" value="811"/>
</dbReference>
<dbReference type="STRING" id="330879.Q4WVA5"/>
<dbReference type="EnsemblFungi" id="EAL91471">
    <property type="protein sequence ID" value="EAL91471"/>
    <property type="gene ID" value="AFUA_5G11400"/>
</dbReference>
<dbReference type="GeneID" id="3511076"/>
<dbReference type="KEGG" id="afm:AFUA_5G11400"/>
<dbReference type="eggNOG" id="KOG2749">
    <property type="taxonomic scope" value="Eukaryota"/>
</dbReference>
<dbReference type="HOGENOM" id="CLU_018195_3_1_1"/>
<dbReference type="InParanoid" id="Q4WVA5"/>
<dbReference type="OMA" id="VQYVNCH"/>
<dbReference type="OrthoDB" id="258143at2759"/>
<dbReference type="Proteomes" id="UP000002530">
    <property type="component" value="Chromosome 5"/>
</dbReference>
<dbReference type="GO" id="GO:0005849">
    <property type="term" value="C:mRNA cleavage factor complex"/>
    <property type="evidence" value="ECO:0007669"/>
    <property type="project" value="UniProtKB-UniRule"/>
</dbReference>
<dbReference type="GO" id="GO:0005634">
    <property type="term" value="C:nucleus"/>
    <property type="evidence" value="ECO:0000318"/>
    <property type="project" value="GO_Central"/>
</dbReference>
<dbReference type="GO" id="GO:0005524">
    <property type="term" value="F:ATP binding"/>
    <property type="evidence" value="ECO:0007669"/>
    <property type="project" value="UniProtKB-UniRule"/>
</dbReference>
<dbReference type="GO" id="GO:0051731">
    <property type="term" value="F:polynucleotide 5'-hydroxyl-kinase activity"/>
    <property type="evidence" value="ECO:0000318"/>
    <property type="project" value="GO_Central"/>
</dbReference>
<dbReference type="GO" id="GO:0031124">
    <property type="term" value="P:mRNA 3'-end processing"/>
    <property type="evidence" value="ECO:0007669"/>
    <property type="project" value="UniProtKB-UniRule"/>
</dbReference>
<dbReference type="GO" id="GO:0006388">
    <property type="term" value="P:tRNA splicing, via endonucleolytic cleavage and ligation"/>
    <property type="evidence" value="ECO:0000318"/>
    <property type="project" value="GO_Central"/>
</dbReference>
<dbReference type="FunFam" id="3.40.50.300:FF:002095">
    <property type="entry name" value="mRNA cleavage and polyadenylation factor clp1"/>
    <property type="match status" value="1"/>
</dbReference>
<dbReference type="FunFam" id="2.60.120.1030:FF:000001">
    <property type="entry name" value="Protein CLP1 homolog 5"/>
    <property type="match status" value="1"/>
</dbReference>
<dbReference type="Gene3D" id="2.60.120.1030">
    <property type="entry name" value="Clp1, DNA binding domain"/>
    <property type="match status" value="1"/>
</dbReference>
<dbReference type="Gene3D" id="3.40.50.300">
    <property type="entry name" value="P-loop containing nucleotide triphosphate hydrolases"/>
    <property type="match status" value="1"/>
</dbReference>
<dbReference type="Gene3D" id="2.40.30.330">
    <property type="entry name" value="Pre-mRNA cleavage complex subunit Clp1, C-terminal domain"/>
    <property type="match status" value="1"/>
</dbReference>
<dbReference type="HAMAP" id="MF_03035">
    <property type="entry name" value="Clp1"/>
    <property type="match status" value="1"/>
</dbReference>
<dbReference type="InterPro" id="IPR028606">
    <property type="entry name" value="Clp1"/>
</dbReference>
<dbReference type="InterPro" id="IPR045116">
    <property type="entry name" value="Clp1/Grc3"/>
</dbReference>
<dbReference type="InterPro" id="IPR010655">
    <property type="entry name" value="Clp1_C"/>
</dbReference>
<dbReference type="InterPro" id="IPR038238">
    <property type="entry name" value="Clp1_C_sf"/>
</dbReference>
<dbReference type="InterPro" id="IPR032324">
    <property type="entry name" value="Clp1_N"/>
</dbReference>
<dbReference type="InterPro" id="IPR038239">
    <property type="entry name" value="Clp1_N_sf"/>
</dbReference>
<dbReference type="InterPro" id="IPR032319">
    <property type="entry name" value="CLP1_P"/>
</dbReference>
<dbReference type="InterPro" id="IPR027417">
    <property type="entry name" value="P-loop_NTPase"/>
</dbReference>
<dbReference type="PANTHER" id="PTHR12755">
    <property type="entry name" value="CLEAVAGE/POLYADENYLATION FACTOR IA SUBUNIT CLP1P"/>
    <property type="match status" value="1"/>
</dbReference>
<dbReference type="PANTHER" id="PTHR12755:SF6">
    <property type="entry name" value="POLYRIBONUCLEOTIDE 5'-HYDROXYL-KINASE CLP1"/>
    <property type="match status" value="1"/>
</dbReference>
<dbReference type="Pfam" id="PF06807">
    <property type="entry name" value="Clp1"/>
    <property type="match status" value="1"/>
</dbReference>
<dbReference type="Pfam" id="PF16573">
    <property type="entry name" value="CLP1_N"/>
    <property type="match status" value="1"/>
</dbReference>
<dbReference type="Pfam" id="PF16575">
    <property type="entry name" value="CLP1_P"/>
    <property type="match status" value="1"/>
</dbReference>
<dbReference type="SUPFAM" id="SSF52540">
    <property type="entry name" value="P-loop containing nucleoside triphosphate hydrolases"/>
    <property type="match status" value="1"/>
</dbReference>
<organism>
    <name type="scientific">Aspergillus fumigatus (strain ATCC MYA-4609 / CBS 101355 / FGSC A1100 / Af293)</name>
    <name type="common">Neosartorya fumigata</name>
    <dbReference type="NCBI Taxonomy" id="330879"/>
    <lineage>
        <taxon>Eukaryota</taxon>
        <taxon>Fungi</taxon>
        <taxon>Dikarya</taxon>
        <taxon>Ascomycota</taxon>
        <taxon>Pezizomycotina</taxon>
        <taxon>Eurotiomycetes</taxon>
        <taxon>Eurotiomycetidae</taxon>
        <taxon>Eurotiales</taxon>
        <taxon>Aspergillaceae</taxon>
        <taxon>Aspergillus</taxon>
        <taxon>Aspergillus subgen. Fumigati</taxon>
    </lineage>
</organism>
<feature type="chain" id="PRO_0000375194" description="mRNA cleavage and polyadenylation factor clp1">
    <location>
        <begin position="1"/>
        <end position="552"/>
    </location>
</feature>
<feature type="region of interest" description="Disordered" evidence="2">
    <location>
        <begin position="409"/>
        <end position="471"/>
    </location>
</feature>
<feature type="compositionally biased region" description="Basic and acidic residues" evidence="2">
    <location>
        <begin position="432"/>
        <end position="444"/>
    </location>
</feature>
<feature type="compositionally biased region" description="Low complexity" evidence="2">
    <location>
        <begin position="459"/>
        <end position="468"/>
    </location>
</feature>
<feature type="binding site" evidence="1">
    <location>
        <position position="32"/>
    </location>
    <ligand>
        <name>ATP</name>
        <dbReference type="ChEBI" id="CHEBI:30616"/>
    </ligand>
</feature>
<feature type="binding site" evidence="1">
    <location>
        <position position="71"/>
    </location>
    <ligand>
        <name>ATP</name>
        <dbReference type="ChEBI" id="CHEBI:30616"/>
    </ligand>
</feature>
<feature type="binding site" evidence="1">
    <location>
        <begin position="159"/>
        <end position="164"/>
    </location>
    <ligand>
        <name>ATP</name>
        <dbReference type="ChEBI" id="CHEBI:30616"/>
    </ligand>
</feature>
<protein>
    <recommendedName>
        <fullName evidence="1">mRNA cleavage and polyadenylation factor clp1</fullName>
    </recommendedName>
</protein>
<accession>Q4WVA5</accession>
<comment type="function">
    <text evidence="1">Required for endonucleolytic cleavage during polyadenylation-dependent pre-mRNA 3'-end formation.</text>
</comment>
<comment type="subunit">
    <text evidence="1">Component of a pre-mRNA cleavage factor complex. Interacts directly with PCF11.</text>
</comment>
<comment type="subcellular location">
    <subcellularLocation>
        <location evidence="1">Nucleus</location>
    </subcellularLocation>
</comment>
<comment type="similarity">
    <text evidence="1">Belongs to the Clp1 family. Clp1 subfamily.</text>
</comment>
<comment type="caution">
    <text evidence="3">May lack the polyribonucleotide 5'-hydroxyl-kinase and polynucleotide 5'-hydroxyl-kinase activities that are characteristic of the human ortholog.</text>
</comment>
<gene>
    <name type="primary">clp1</name>
    <name type="ORF">AFUA_5G11400</name>
</gene>
<keyword id="KW-0067">ATP-binding</keyword>
<keyword id="KW-0507">mRNA processing</keyword>
<keyword id="KW-0547">Nucleotide-binding</keyword>
<keyword id="KW-0539">Nucleus</keyword>
<keyword id="KW-1185">Reference proteome</keyword>
<reference key="1">
    <citation type="journal article" date="2005" name="Nature">
        <title>Genomic sequence of the pathogenic and allergenic filamentous fungus Aspergillus fumigatus.</title>
        <authorList>
            <person name="Nierman W.C."/>
            <person name="Pain A."/>
            <person name="Anderson M.J."/>
            <person name="Wortman J.R."/>
            <person name="Kim H.S."/>
            <person name="Arroyo J."/>
            <person name="Berriman M."/>
            <person name="Abe K."/>
            <person name="Archer D.B."/>
            <person name="Bermejo C."/>
            <person name="Bennett J.W."/>
            <person name="Bowyer P."/>
            <person name="Chen D."/>
            <person name="Collins M."/>
            <person name="Coulsen R."/>
            <person name="Davies R."/>
            <person name="Dyer P.S."/>
            <person name="Farman M.L."/>
            <person name="Fedorova N."/>
            <person name="Fedorova N.D."/>
            <person name="Feldblyum T.V."/>
            <person name="Fischer R."/>
            <person name="Fosker N."/>
            <person name="Fraser A."/>
            <person name="Garcia J.L."/>
            <person name="Garcia M.J."/>
            <person name="Goble A."/>
            <person name="Goldman G.H."/>
            <person name="Gomi K."/>
            <person name="Griffith-Jones S."/>
            <person name="Gwilliam R."/>
            <person name="Haas B.J."/>
            <person name="Haas H."/>
            <person name="Harris D.E."/>
            <person name="Horiuchi H."/>
            <person name="Huang J."/>
            <person name="Humphray S."/>
            <person name="Jimenez J."/>
            <person name="Keller N."/>
            <person name="Khouri H."/>
            <person name="Kitamoto K."/>
            <person name="Kobayashi T."/>
            <person name="Konzack S."/>
            <person name="Kulkarni R."/>
            <person name="Kumagai T."/>
            <person name="Lafton A."/>
            <person name="Latge J.-P."/>
            <person name="Li W."/>
            <person name="Lord A."/>
            <person name="Lu C."/>
            <person name="Majoros W.H."/>
            <person name="May G.S."/>
            <person name="Miller B.L."/>
            <person name="Mohamoud Y."/>
            <person name="Molina M."/>
            <person name="Monod M."/>
            <person name="Mouyna I."/>
            <person name="Mulligan S."/>
            <person name="Murphy L.D."/>
            <person name="O'Neil S."/>
            <person name="Paulsen I."/>
            <person name="Penalva M.A."/>
            <person name="Pertea M."/>
            <person name="Price C."/>
            <person name="Pritchard B.L."/>
            <person name="Quail M.A."/>
            <person name="Rabbinowitsch E."/>
            <person name="Rawlins N."/>
            <person name="Rajandream M.A."/>
            <person name="Reichard U."/>
            <person name="Renauld H."/>
            <person name="Robson G.D."/>
            <person name="Rodriguez de Cordoba S."/>
            <person name="Rodriguez-Pena J.M."/>
            <person name="Ronning C.M."/>
            <person name="Rutter S."/>
            <person name="Salzberg S.L."/>
            <person name="Sanchez M."/>
            <person name="Sanchez-Ferrero J.C."/>
            <person name="Saunders D."/>
            <person name="Seeger K."/>
            <person name="Squares R."/>
            <person name="Squares S."/>
            <person name="Takeuchi M."/>
            <person name="Tekaia F."/>
            <person name="Turner G."/>
            <person name="Vazquez de Aldana C.R."/>
            <person name="Weidman J."/>
            <person name="White O."/>
            <person name="Woodward J.R."/>
            <person name="Yu J.-H."/>
            <person name="Fraser C.M."/>
            <person name="Galagan J.E."/>
            <person name="Asai K."/>
            <person name="Machida M."/>
            <person name="Hall N."/>
            <person name="Barrell B.G."/>
            <person name="Denning D.W."/>
        </authorList>
    </citation>
    <scope>NUCLEOTIDE SEQUENCE [LARGE SCALE GENOMIC DNA]</scope>
    <source>
        <strain>ATCC MYA-4609 / CBS 101355 / FGSC A1100 / Af293</strain>
    </source>
</reference>
<name>CLP1_ASPFU</name>
<sequence>MSLPGLELSQTSSEREFVPAPPTQITLSKGSEWRFEVAFGTAIRVKLLAGTAELFGTELAASQTYTFSGTKAAIYTWHGCTLEVSAGDTISTIDGLGSGGLNGEGARGYGAGGCQSEYTAEETPMVEYANVHFALEAMRQEAKATGKDGPRVLILGPENAGKTSVAKILTAYATKVGRQPIVVNLDPAEGMLSVPGTLTATAFRTMMNVEEGWGSSPMSGPSAVPVKLPLVYFYPLQNPLEAEGAVYRPIVSRLALSVTGRMAEDEDTRETGIIVDTPGILSAGKPGSLEIINHIVTEFASSERLYSTMMKNYDNKPTSSASAAASDERITVVKLSKSGGCVDRDAAFMKSVRESQIRTYFFGNPIPSTASAALSMSASSTTNITLSPHAQQLDFDSLAVYNYTIASSDEDEDEYDPSQFGASDTFLPGGRNDAEGPETKHAEETSFTSSVPGLGGSSGDDAASGSSAVPLKKVLPPAPNTLANSLLAVTHTAPNASPAEIRDASIMGFLYVADVDSEKGKIRVLAPIGGRVPPRAIVWGKKWPGEVVGLVG</sequence>